<sequence length="1770" mass="202095">MESQQLHQNPHSQHGSAYASVTSKEVPSNQDPLAVSASNLPEFDRDSTKVNSQEETTPGTSAVPENHHHVSPQPASVPPPQNGQYQQHGMMTPNKAMASNWAHYQQPSMMTCSHYQTSPAYYQPDPHYPLPQYIPPLSTSSPDPIDSQDQHSEVPQAKTKVRNNVLPPHTLTSEENFSTWVKFYIRFLKNSNLGDIIPNDQGEIKRQMTYEEHAYIYNTFQAFAPFHLLPTWVKQILEINYSDILTVLCKSVSKMQTNNQELKDWIALANLEYNGSTSADTFEITVSTIIQRLKENNINVSDRLACQLILKGLSGDFKYLRNQYRTKTNMKLSQLFAEIQLIYDENKIMNLNKPSQYKQHSEYKNVSRTSPNTTNTKVTTRNYHRTNSSKPRAAKAHNIATSSKFSRVNSDHINESTVSSQYLSDDNELSLGQQQKESKPTRTIDSNDELPDHLLIDSGASQTLVRSAHYLHHATPNSEINIVDAQKQDIPINAIGNLHFNFQNGTKTSIKALHTPNIAYDLLSLSELANQNITACFTRNTLERSDGTVLAPIVKHGDFYWLSKKYLIPSHISKLTINNVNKSKSVNKYPYPLIHRMLGHANFRSIQKSLKKNAVTYLKESDIEWSNASTYQCPDCLIGKSTKHRHVKGSRLKYQESYEPFQYLHTDIFGPVHHLPKSAPSYFISFTDEKTRFQWVYPLHDRREESILNVFTSILAFIKNQFNARVLVIQMDRGSEYTNKTLHKFFTNRGITACYTTTADSRAHGVAERLNRTLLNDCRTLLHCSGLPNHLWFSAVEFSTIIRNSLVSPKNDKSARQHAGLAGLDITTILPFGQPVIVNNHNPDSKIHPRGIPGYALHPSRNSYGYIIYLPSLKKTVDTTNYVILQNNQTKLDQFDYDTLTFDDDLNRLTAHNQSFIEQNETEQSYDQNTESDHDYQSEIEINSDPLVNDFSSQSLNPLQLDKEPVQKVRAPKEVDADISEYNILPSTIRSRTPHIINKESTEMGGTIESDTTSPRHSSTFTARNQKRPGSPNDMIDLTSQDRVNYGLENIKTTRLGGTEEPYIQRNSDTNIKYRTTNSTPSIDDRSSNSESTTPIISIETKAVCDNTPSIDTDPPEYRSSDHATPNIMPDKSSKNVTADSILDDLPLPDLTHKSPTDTSDVAKDIPHIHSRQTNSSLGGMDDSNVLTTTKSKKRSLEDNETEIEVSRDTWNNKNMRSLEPPRSKKRINLIAAIKGVKSIKPVRTTLRYDEAITYNKDNKEKDRYVEAYHKEISQLLKMNTWDTNKYYDRNDIDPKKVINSMFIFNKKRDGTHKARFVARGDIQHPDTYDSDMQSNTVHHYALMTSLSIALDNDYYITQLDISSAYLYADIKEELYIRPPPHLGLNDKLLRLRKSLYGLKQSGANWYETIKSYLINCCDMQEVRGWSCVFKNSQVTICLFVDDMILFSKDLNANKKIITTLKKQYDTKIINLGEGDNEIQYDILGLEIKYQRSKYMKLGMEKSLTEKLPKLNVPLNPKGKKLRAPGQPGHYIDQDELEIDEDEYKEKVHEMQKLIGLASYVGYKFRFDLLYYINTLAQHILFPSRQVLDMTYELIQFMWDTRDKQLIWHKNKPTKPDNKLVAISDASYGNQPYYKSQIGNIFLLNGKVIGGKSTKASLTCTSTTEAEIHAVSEAIPLLNNLSHLVQELNKKPIIKGLLTDSRSTISIIKSTNEEKFRNRFFGTKAMRLRDEVSGNNLYVYYIETKKNIADVMTKPLPIKTFKLLTNKWIH</sequence>
<protein>
    <recommendedName>
        <fullName>Transposon Ty2-DR2 Gag-Pol polyprotein</fullName>
    </recommendedName>
    <alternativeName>
        <fullName>TY2A-TY2B</fullName>
    </alternativeName>
    <alternativeName>
        <fullName>Transposon Ty2 TYA-TYB polyprotein</fullName>
    </alternativeName>
    <component>
        <recommendedName>
            <fullName>Capsid protein</fullName>
            <shortName>CA</shortName>
        </recommendedName>
    </component>
    <component>
        <recommendedName>
            <fullName>Ty2 protease</fullName>
            <shortName>PR</shortName>
            <ecNumber>3.4.23.-</ecNumber>
        </recommendedName>
    </component>
    <component>
        <recommendedName>
            <fullName>Integrase</fullName>
            <shortName>IN</shortName>
        </recommendedName>
    </component>
    <component>
        <recommendedName>
            <fullName>Reverse transcriptase/ribonuclease H</fullName>
            <shortName>RT</shortName>
            <shortName>RT-RH</shortName>
            <ecNumber>2.7.7.49</ecNumber>
            <ecNumber>2.7.7.7</ecNumber>
            <ecNumber>3.1.26.4</ecNumber>
        </recommendedName>
    </component>
</protein>
<evidence type="ECO:0000250" key="1"/>
<evidence type="ECO:0000255" key="2">
    <source>
        <dbReference type="PROSITE-ProRule" id="PRU00457"/>
    </source>
</evidence>
<evidence type="ECO:0000256" key="3">
    <source>
        <dbReference type="SAM" id="MobiDB-lite"/>
    </source>
</evidence>
<evidence type="ECO:0000305" key="4"/>
<dbReference type="EC" id="3.4.23.-"/>
<dbReference type="EC" id="2.7.7.49"/>
<dbReference type="EC" id="2.7.7.7"/>
<dbReference type="EC" id="3.1.26.4"/>
<dbReference type="EMBL" id="Z68194">
    <property type="protein sequence ID" value="CAA92351.1"/>
    <property type="status" value="ALT_SEQ"/>
    <property type="molecule type" value="Genomic_DNA"/>
</dbReference>
<dbReference type="EMBL" id="BK006938">
    <property type="protein sequence ID" value="DAA12051.1"/>
    <property type="molecule type" value="Genomic_DNA"/>
</dbReference>
<dbReference type="PIR" id="S69950">
    <property type="entry name" value="S69950"/>
</dbReference>
<dbReference type="RefSeq" id="NP_058142.3">
    <molecule id="Q03494-1"/>
    <property type="nucleotide sequence ID" value="NM_001184419.4"/>
</dbReference>
<dbReference type="BioGRID" id="32261">
    <property type="interactions" value="3"/>
</dbReference>
<dbReference type="FunCoup" id="Q03494">
    <property type="interactions" value="55"/>
</dbReference>
<dbReference type="IntAct" id="Q03494">
    <property type="interactions" value="3"/>
</dbReference>
<dbReference type="MEROPS" id="A11.003"/>
<dbReference type="iPTMnet" id="Q03494"/>
<dbReference type="PaxDb" id="4932-YDR210W-B"/>
<dbReference type="PeptideAtlas" id="Q03494"/>
<dbReference type="GeneID" id="851793"/>
<dbReference type="KEGG" id="sce:YDR210W-B"/>
<dbReference type="AGR" id="SGD:S000007393"/>
<dbReference type="SGD" id="S000007393">
    <property type="gene designation" value="YDR210W-B"/>
</dbReference>
<dbReference type="VEuPathDB" id="FungiDB:YDR210W-B"/>
<dbReference type="eggNOG" id="KOG0017">
    <property type="taxonomic scope" value="Eukaryota"/>
</dbReference>
<dbReference type="HOGENOM" id="CLU_244151_0_0_1"/>
<dbReference type="InParanoid" id="Q03494"/>
<dbReference type="OrthoDB" id="4046078at2759"/>
<dbReference type="Proteomes" id="UP000002311">
    <property type="component" value="Chromosome IV"/>
</dbReference>
<dbReference type="RNAct" id="Q03494">
    <property type="molecule type" value="protein"/>
</dbReference>
<dbReference type="GO" id="GO:0005737">
    <property type="term" value="C:cytoplasm"/>
    <property type="evidence" value="ECO:0007669"/>
    <property type="project" value="UniProtKB-SubCell"/>
</dbReference>
<dbReference type="GO" id="GO:0005634">
    <property type="term" value="C:nucleus"/>
    <property type="evidence" value="ECO:0000314"/>
    <property type="project" value="SGD"/>
</dbReference>
<dbReference type="GO" id="GO:0004190">
    <property type="term" value="F:aspartic-type endopeptidase activity"/>
    <property type="evidence" value="ECO:0007669"/>
    <property type="project" value="UniProtKB-KW"/>
</dbReference>
<dbReference type="GO" id="GO:0005524">
    <property type="term" value="F:ATP binding"/>
    <property type="evidence" value="ECO:0007669"/>
    <property type="project" value="UniProtKB-KW"/>
</dbReference>
<dbReference type="GO" id="GO:0003677">
    <property type="term" value="F:DNA binding"/>
    <property type="evidence" value="ECO:0007669"/>
    <property type="project" value="UniProtKB-KW"/>
</dbReference>
<dbReference type="GO" id="GO:0003887">
    <property type="term" value="F:DNA-directed DNA polymerase activity"/>
    <property type="evidence" value="ECO:0007669"/>
    <property type="project" value="UniProtKB-KW"/>
</dbReference>
<dbReference type="GO" id="GO:0003723">
    <property type="term" value="F:RNA binding"/>
    <property type="evidence" value="ECO:0007669"/>
    <property type="project" value="UniProtKB-KW"/>
</dbReference>
<dbReference type="GO" id="GO:0003964">
    <property type="term" value="F:RNA-directed DNA polymerase activity"/>
    <property type="evidence" value="ECO:0007669"/>
    <property type="project" value="UniProtKB-KW"/>
</dbReference>
<dbReference type="GO" id="GO:0004523">
    <property type="term" value="F:RNA-DNA hybrid ribonuclease activity"/>
    <property type="evidence" value="ECO:0007669"/>
    <property type="project" value="UniProtKB-EC"/>
</dbReference>
<dbReference type="GO" id="GO:0008270">
    <property type="term" value="F:zinc ion binding"/>
    <property type="evidence" value="ECO:0007669"/>
    <property type="project" value="UniProtKB-KW"/>
</dbReference>
<dbReference type="GO" id="GO:0015074">
    <property type="term" value="P:DNA integration"/>
    <property type="evidence" value="ECO:0007669"/>
    <property type="project" value="UniProtKB-KW"/>
</dbReference>
<dbReference type="GO" id="GO:0006310">
    <property type="term" value="P:DNA recombination"/>
    <property type="evidence" value="ECO:0007669"/>
    <property type="project" value="UniProtKB-KW"/>
</dbReference>
<dbReference type="GO" id="GO:0006508">
    <property type="term" value="P:proteolysis"/>
    <property type="evidence" value="ECO:0007669"/>
    <property type="project" value="UniProtKB-KW"/>
</dbReference>
<dbReference type="GO" id="GO:0032196">
    <property type="term" value="P:transposition"/>
    <property type="evidence" value="ECO:0007669"/>
    <property type="project" value="UniProtKB-KW"/>
</dbReference>
<dbReference type="GO" id="GO:0075523">
    <property type="term" value="P:viral translational frameshifting"/>
    <property type="evidence" value="ECO:0007669"/>
    <property type="project" value="UniProtKB-KW"/>
</dbReference>
<dbReference type="CDD" id="cd09272">
    <property type="entry name" value="RNase_HI_RT_Ty1"/>
    <property type="match status" value="1"/>
</dbReference>
<dbReference type="FunFam" id="3.30.420.10:FF:000050">
    <property type="entry name" value="Transposon Ty2-DR3 Gag-Pol polyprotein"/>
    <property type="match status" value="1"/>
</dbReference>
<dbReference type="Gene3D" id="3.30.420.10">
    <property type="entry name" value="Ribonuclease H-like superfamily/Ribonuclease H"/>
    <property type="match status" value="1"/>
</dbReference>
<dbReference type="InterPro" id="IPR043502">
    <property type="entry name" value="DNA/RNA_pol_sf"/>
</dbReference>
<dbReference type="InterPro" id="IPR001584">
    <property type="entry name" value="Integrase_cat-core"/>
</dbReference>
<dbReference type="InterPro" id="IPR054722">
    <property type="entry name" value="PolX-like_BBD"/>
</dbReference>
<dbReference type="InterPro" id="IPR039537">
    <property type="entry name" value="Retrotran_Ty1/copia-like"/>
</dbReference>
<dbReference type="InterPro" id="IPR012337">
    <property type="entry name" value="RNaseH-like_sf"/>
</dbReference>
<dbReference type="InterPro" id="IPR036397">
    <property type="entry name" value="RNaseH_sf"/>
</dbReference>
<dbReference type="InterPro" id="IPR013103">
    <property type="entry name" value="RVT_2"/>
</dbReference>
<dbReference type="InterPro" id="IPR015820">
    <property type="entry name" value="TYA"/>
</dbReference>
<dbReference type="PANTHER" id="PTHR42648">
    <property type="entry name" value="TRANSPOSASE, PUTATIVE-RELATED"/>
    <property type="match status" value="1"/>
</dbReference>
<dbReference type="PANTHER" id="PTHR42648:SF11">
    <property type="entry name" value="TRANSPOSON TY4-P GAG-POL POLYPROTEIN"/>
    <property type="match status" value="1"/>
</dbReference>
<dbReference type="Pfam" id="PF22936">
    <property type="entry name" value="Pol_BBD"/>
    <property type="match status" value="1"/>
</dbReference>
<dbReference type="Pfam" id="PF00665">
    <property type="entry name" value="rve"/>
    <property type="match status" value="1"/>
</dbReference>
<dbReference type="Pfam" id="PF07727">
    <property type="entry name" value="RVT_2"/>
    <property type="match status" value="1"/>
</dbReference>
<dbReference type="Pfam" id="PF01021">
    <property type="entry name" value="TYA"/>
    <property type="match status" value="1"/>
</dbReference>
<dbReference type="SUPFAM" id="SSF56672">
    <property type="entry name" value="DNA/RNA polymerases"/>
    <property type="match status" value="1"/>
</dbReference>
<dbReference type="SUPFAM" id="SSF53098">
    <property type="entry name" value="Ribonuclease H-like"/>
    <property type="match status" value="1"/>
</dbReference>
<dbReference type="PROSITE" id="PS50994">
    <property type="entry name" value="INTEGRASE"/>
    <property type="match status" value="1"/>
</dbReference>
<gene>
    <name type="primary">TY2B-DR2</name>
    <name type="synonym">YDRWTy2-2 POL</name>
    <name type="ordered locus">YDR210W-B</name>
    <name type="ORF">YD8142A.09</name>
</gene>
<reference key="1">
    <citation type="journal article" date="1997" name="Nature">
        <title>The nucleotide sequence of Saccharomyces cerevisiae chromosome IV.</title>
        <authorList>
            <person name="Jacq C."/>
            <person name="Alt-Moerbe J."/>
            <person name="Andre B."/>
            <person name="Arnold W."/>
            <person name="Bahr A."/>
            <person name="Ballesta J.P.G."/>
            <person name="Bargues M."/>
            <person name="Baron L."/>
            <person name="Becker A."/>
            <person name="Biteau N."/>
            <person name="Bloecker H."/>
            <person name="Blugeon C."/>
            <person name="Boskovic J."/>
            <person name="Brandt P."/>
            <person name="Brueckner M."/>
            <person name="Buitrago M.J."/>
            <person name="Coster F."/>
            <person name="Delaveau T."/>
            <person name="del Rey F."/>
            <person name="Dujon B."/>
            <person name="Eide L.G."/>
            <person name="Garcia-Cantalejo J.M."/>
            <person name="Goffeau A."/>
            <person name="Gomez-Peris A."/>
            <person name="Granotier C."/>
            <person name="Hanemann V."/>
            <person name="Hankeln T."/>
            <person name="Hoheisel J.D."/>
            <person name="Jaeger W."/>
            <person name="Jimenez A."/>
            <person name="Jonniaux J.-L."/>
            <person name="Kraemer C."/>
            <person name="Kuester H."/>
            <person name="Laamanen P."/>
            <person name="Legros Y."/>
            <person name="Louis E.J."/>
            <person name="Moeller-Rieker S."/>
            <person name="Monnet A."/>
            <person name="Moro M."/>
            <person name="Mueller-Auer S."/>
            <person name="Nussbaumer B."/>
            <person name="Paricio N."/>
            <person name="Paulin L."/>
            <person name="Perea J."/>
            <person name="Perez-Alonso M."/>
            <person name="Perez-Ortin J.E."/>
            <person name="Pohl T.M."/>
            <person name="Prydz H."/>
            <person name="Purnelle B."/>
            <person name="Rasmussen S.W."/>
            <person name="Remacha M.A."/>
            <person name="Revuelta J.L."/>
            <person name="Rieger M."/>
            <person name="Salom D."/>
            <person name="Saluz H.P."/>
            <person name="Saiz J.E."/>
            <person name="Saren A.-M."/>
            <person name="Schaefer M."/>
            <person name="Scharfe M."/>
            <person name="Schmidt E.R."/>
            <person name="Schneider C."/>
            <person name="Scholler P."/>
            <person name="Schwarz S."/>
            <person name="Soler-Mira A."/>
            <person name="Urrestarazu L.A."/>
            <person name="Verhasselt P."/>
            <person name="Vissers S."/>
            <person name="Voet M."/>
            <person name="Volckaert G."/>
            <person name="Wagner G."/>
            <person name="Wambutt R."/>
            <person name="Wedler E."/>
            <person name="Wedler H."/>
            <person name="Woelfl S."/>
            <person name="Harris D.E."/>
            <person name="Bowman S."/>
            <person name="Brown D."/>
            <person name="Churcher C.M."/>
            <person name="Connor R."/>
            <person name="Dedman K."/>
            <person name="Gentles S."/>
            <person name="Hamlin N."/>
            <person name="Hunt S."/>
            <person name="Jones L."/>
            <person name="McDonald S."/>
            <person name="Murphy L.D."/>
            <person name="Niblett D."/>
            <person name="Odell C."/>
            <person name="Oliver K."/>
            <person name="Rajandream M.A."/>
            <person name="Richards C."/>
            <person name="Shore L."/>
            <person name="Walsh S.V."/>
            <person name="Barrell B.G."/>
            <person name="Dietrich F.S."/>
            <person name="Mulligan J.T."/>
            <person name="Allen E."/>
            <person name="Araujo R."/>
            <person name="Aviles E."/>
            <person name="Berno A."/>
            <person name="Carpenter J."/>
            <person name="Chen E."/>
            <person name="Cherry J.M."/>
            <person name="Chung E."/>
            <person name="Duncan M."/>
            <person name="Hunicke-Smith S."/>
            <person name="Hyman R.W."/>
            <person name="Komp C."/>
            <person name="Lashkari D."/>
            <person name="Lew H."/>
            <person name="Lin D."/>
            <person name="Mosedale D."/>
            <person name="Nakahara K."/>
            <person name="Namath A."/>
            <person name="Oefner P."/>
            <person name="Oh C."/>
            <person name="Petel F.X."/>
            <person name="Roberts D."/>
            <person name="Schramm S."/>
            <person name="Schroeder M."/>
            <person name="Shogren T."/>
            <person name="Shroff N."/>
            <person name="Winant A."/>
            <person name="Yelton M.A."/>
            <person name="Botstein D."/>
            <person name="Davis R.W."/>
            <person name="Johnston M."/>
            <person name="Andrews S."/>
            <person name="Brinkman R."/>
            <person name="Cooper J."/>
            <person name="Ding H."/>
            <person name="Du Z."/>
            <person name="Favello A."/>
            <person name="Fulton L."/>
            <person name="Gattung S."/>
            <person name="Greco T."/>
            <person name="Hallsworth K."/>
            <person name="Hawkins J."/>
            <person name="Hillier L.W."/>
            <person name="Jier M."/>
            <person name="Johnson D."/>
            <person name="Johnston L."/>
            <person name="Kirsten J."/>
            <person name="Kucaba T."/>
            <person name="Langston Y."/>
            <person name="Latreille P."/>
            <person name="Le T."/>
            <person name="Mardis E."/>
            <person name="Menezes S."/>
            <person name="Miller N."/>
            <person name="Nhan M."/>
            <person name="Pauley A."/>
            <person name="Peluso D."/>
            <person name="Rifkin L."/>
            <person name="Riles L."/>
            <person name="Taich A."/>
            <person name="Trevaskis E."/>
            <person name="Vignati D."/>
            <person name="Wilcox L."/>
            <person name="Wohldman P."/>
            <person name="Vaudin M."/>
            <person name="Wilson R."/>
            <person name="Waterston R."/>
            <person name="Albermann K."/>
            <person name="Hani J."/>
            <person name="Heumann K."/>
            <person name="Kleine K."/>
            <person name="Mewes H.-W."/>
            <person name="Zollner A."/>
            <person name="Zaccaria P."/>
        </authorList>
    </citation>
    <scope>NUCLEOTIDE SEQUENCE [LARGE SCALE GENOMIC DNA]</scope>
    <source>
        <strain>ATCC 204508 / S288c</strain>
    </source>
</reference>
<reference key="2">
    <citation type="journal article" date="2014" name="G3 (Bethesda)">
        <title>The reference genome sequence of Saccharomyces cerevisiae: Then and now.</title>
        <authorList>
            <person name="Engel S.R."/>
            <person name="Dietrich F.S."/>
            <person name="Fisk D.G."/>
            <person name="Binkley G."/>
            <person name="Balakrishnan R."/>
            <person name="Costanzo M.C."/>
            <person name="Dwight S.S."/>
            <person name="Hitz B.C."/>
            <person name="Karra K."/>
            <person name="Nash R.S."/>
            <person name="Weng S."/>
            <person name="Wong E.D."/>
            <person name="Lloyd P."/>
            <person name="Skrzypek M.S."/>
            <person name="Miyasato S.R."/>
            <person name="Simison M."/>
            <person name="Cherry J.M."/>
        </authorList>
    </citation>
    <scope>GENOME REANNOTATION</scope>
    <source>
        <strain>ATCC 204508 / S288c</strain>
    </source>
</reference>
<reference key="3">
    <citation type="journal article" date="1998" name="Genome Res.">
        <title>Transposable elements and genome organization: a comprehensive survey of retrotransposons revealed by the complete Saccharomyces cerevisiae genome sequence.</title>
        <authorList>
            <person name="Kim J.M."/>
            <person name="Vanguri S."/>
            <person name="Boeke J.D."/>
            <person name="Gabriel A."/>
            <person name="Voytas D.F."/>
        </authorList>
    </citation>
    <scope>NOMENCLATURE</scope>
</reference>
<reference key="4">
    <citation type="journal article" date="2005" name="Cytogenet. Genome Res.">
        <title>Happy together: the life and times of Ty retrotransposons and their hosts.</title>
        <authorList>
            <person name="Lesage P."/>
            <person name="Todeschini A.L."/>
        </authorList>
    </citation>
    <scope>REVIEW</scope>
</reference>
<name>YD22B_YEAST</name>
<comment type="function">
    <text evidence="1">Capsid protein (CA) is the structural component of the virus-like particle (VLP), forming the shell that encapsulates the retrotransposons dimeric RNA genome. The particles are assembled from trimer-clustered units and there are holes in the capsid shells that allow for the diffusion of macromolecules. CA also has nucleocapsid-like chaperone activity, promoting primer tRNA(i)-Met annealing to the multipartite primer-binding site (PBS), dimerization of Ty2 RNA and initiation of reverse transcription (By similarity).</text>
</comment>
<comment type="function">
    <text evidence="1">The aspartyl protease (PR) mediates the proteolytic cleavages of the Gag and Gag-Pol polyproteins after assembly of the VLP.</text>
</comment>
<comment type="function">
    <text evidence="1">Reverse transcriptase/ribonuclease H (RT) is a multifunctional enzyme that catalyzes the conversion of the retro-elements RNA genome into dsDNA within the VLP. The enzyme displays a DNA polymerase activity that can copy either DNA or RNA templates, and a ribonuclease H (RNase H) activity that cleaves the RNA strand of RNA-DNA heteroduplexes during plus-strand synthesis and hydrolyzes RNA primers. The conversion leads to a linear dsDNA copy of the retrotransposon that includes long terminal repeats (LTRs) at both ends (By similarity).</text>
</comment>
<comment type="function">
    <text evidence="1">Integrase (IN) targets the VLP to the nucleus, where a subparticle preintegration complex (PIC) containing at least integrase and the newly synthesized dsDNA copy of the retrotransposon must transit the nuclear membrane. Once in the nucleus, integrase performs the integration of the dsDNA into the host genome (By similarity).</text>
</comment>
<comment type="catalytic activity">
    <reaction>
        <text>DNA(n) + a 2'-deoxyribonucleoside 5'-triphosphate = DNA(n+1) + diphosphate</text>
        <dbReference type="Rhea" id="RHEA:22508"/>
        <dbReference type="Rhea" id="RHEA-COMP:17339"/>
        <dbReference type="Rhea" id="RHEA-COMP:17340"/>
        <dbReference type="ChEBI" id="CHEBI:33019"/>
        <dbReference type="ChEBI" id="CHEBI:61560"/>
        <dbReference type="ChEBI" id="CHEBI:173112"/>
        <dbReference type="EC" id="2.7.7.49"/>
    </reaction>
</comment>
<comment type="catalytic activity">
    <reaction>
        <text>DNA(n) + a 2'-deoxyribonucleoside 5'-triphosphate = DNA(n+1) + diphosphate</text>
        <dbReference type="Rhea" id="RHEA:22508"/>
        <dbReference type="Rhea" id="RHEA-COMP:17339"/>
        <dbReference type="Rhea" id="RHEA-COMP:17340"/>
        <dbReference type="ChEBI" id="CHEBI:33019"/>
        <dbReference type="ChEBI" id="CHEBI:61560"/>
        <dbReference type="ChEBI" id="CHEBI:173112"/>
        <dbReference type="EC" id="2.7.7.7"/>
    </reaction>
</comment>
<comment type="catalytic activity">
    <reaction>
        <text>Endonucleolytic cleavage to 5'-phosphomonoester.</text>
        <dbReference type="EC" id="3.1.26.4"/>
    </reaction>
</comment>
<comment type="subunit">
    <text evidence="1">The capsid protein forms a homotrimer, from which the VLPs are assembled. The protease is a homodimer, whose active site consists of two apposed aspartic acid residues (By similarity).</text>
</comment>
<comment type="subcellular location">
    <subcellularLocation>
        <location>Cytoplasm</location>
    </subcellularLocation>
    <subcellularLocation>
        <location evidence="1">Nucleus</location>
    </subcellularLocation>
</comment>
<comment type="alternative products">
    <event type="ribosomal frameshifting"/>
    <isoform>
        <id>Q03494-1</id>
        <name>Transposon Ty2-DR2 Gag-Pol polyprotein</name>
        <sequence type="displayed"/>
    </isoform>
    <isoform>
        <id>Q03483-1</id>
        <name>Transposon Ty2-DR2 Gag polyprotein</name>
        <sequence type="external"/>
    </isoform>
    <text>The Gag-Pol polyprotein is generated by a +1 ribosomal frameshift.</text>
</comment>
<comment type="domain">
    <text evidence="1">The C-terminal RNA-binding region of CA is sufficient for all its nucleocapsid-like chaperone activities.</text>
</comment>
<comment type="domain">
    <text evidence="1">Integrase core domain contains the D-x(n)-D-x(35)-E motif, named for the phylogenetically conserved glutamic acid and aspartic acid residues and the invariant 35 amino acid spacing between the second and third acidic residues. Each acidic residue of the D,D(35)E motif is independently essential for the 3'-processing and strand transfer activities of purified integrase protein (By similarity).</text>
</comment>
<comment type="PTM">
    <text evidence="1">Initially, virus-like particles (VLPs) are composed of the structural unprocessed proteins Gag and Gag-Pol, and also contain the host initiator methionine tRNA (tRNA(i)-Met) which serves as a primer for minus-strand DNA synthesis, and a dimer of genomic Ty RNA. Processing of the polyproteins occurs within the particle and proceeds by an ordered pathway, called maturation. First, the protease (PR) is released by autocatalytic cleavage of the Gag-Pol polyprotein, and this cleavage is a prerequisite for subsequent processing at the remaining sites to release the mature structural and catalytic proteins. Maturation takes place prior to the RT reaction and is required to produce transposition-competent VLPs (By similarity).</text>
</comment>
<comment type="miscellaneous">
    <text>Retrotransposons are mobile genetic entities that are able to replicate via an RNA intermediate and a reverse transcription step. In contrast to retroviruses, retrotransposons are non-infectious, lack an envelope and remain intracellular. Ty2 retrotransposons belong to the copia elements (pseudoviridae).</text>
</comment>
<comment type="miscellaneous">
    <molecule>Isoform Transposon Ty2-DR2 Gag-Pol polyprotein</molecule>
    <text>Produced by +1 ribosomal frameshifting between codon Leu-431 and Gly-432 of the YDR210W-A ORF.</text>
</comment>
<comment type="sequence caution" evidence="4">
    <conflict type="erroneous gene model prediction">
        <sequence resource="EMBL-CDS" id="CAA92351"/>
    </conflict>
</comment>
<feature type="chain" id="PRO_0000279292" description="Transposon Ty2-DR2 Gag-Pol polyprotein">
    <location>
        <begin position="1"/>
        <end position="1770"/>
    </location>
</feature>
<feature type="chain" id="PRO_0000279293" description="Capsid protein" evidence="1">
    <location>
        <begin position="1"/>
        <end position="397"/>
    </location>
</feature>
<feature type="chain" id="PRO_0000279294" description="Ty2 protease" evidence="1">
    <location>
        <begin position="398"/>
        <end position="578"/>
    </location>
</feature>
<feature type="chain" id="PRO_0000279295" description="Integrase" evidence="1">
    <location>
        <begin position="579"/>
        <end position="1232"/>
    </location>
</feature>
<feature type="chain" id="PRO_0000279296" description="Reverse transcriptase/ribonuclease H" evidence="1">
    <location>
        <begin position="1233"/>
        <end position="1770"/>
    </location>
</feature>
<feature type="domain" description="Integrase catalytic" evidence="2">
    <location>
        <begin position="656"/>
        <end position="831"/>
    </location>
</feature>
<feature type="domain" description="Reverse transcriptase Ty1/copia-type">
    <location>
        <begin position="1353"/>
        <end position="1491"/>
    </location>
</feature>
<feature type="domain" description="RNase H Ty1/copia-type">
    <location>
        <begin position="1625"/>
        <end position="1767"/>
    </location>
</feature>
<feature type="region of interest" description="Disordered" evidence="3">
    <location>
        <begin position="1"/>
        <end position="89"/>
    </location>
</feature>
<feature type="region of interest" description="RNA-binding" evidence="1">
    <location>
        <begin position="295"/>
        <end position="397"/>
    </location>
</feature>
<feature type="region of interest" description="Disordered" evidence="3">
    <location>
        <begin position="360"/>
        <end position="449"/>
    </location>
</feature>
<feature type="region of interest" description="Integrase-type zinc finger-like">
    <location>
        <begin position="579"/>
        <end position="636"/>
    </location>
</feature>
<feature type="region of interest" description="Disordered" evidence="3">
    <location>
        <begin position="1005"/>
        <end position="1038"/>
    </location>
</feature>
<feature type="region of interest" description="Disordered" evidence="3">
    <location>
        <begin position="1059"/>
        <end position="1135"/>
    </location>
</feature>
<feature type="region of interest" description="Disordered" evidence="3">
    <location>
        <begin position="1171"/>
        <end position="1222"/>
    </location>
</feature>
<feature type="short sequence motif" description="Bipartite nuclear localization signal" evidence="1">
    <location>
        <begin position="1193"/>
        <end position="1227"/>
    </location>
</feature>
<feature type="compositionally biased region" description="Polar residues" evidence="3">
    <location>
        <begin position="1"/>
        <end position="39"/>
    </location>
</feature>
<feature type="compositionally biased region" description="Polar residues" evidence="3">
    <location>
        <begin position="49"/>
        <end position="60"/>
    </location>
</feature>
<feature type="compositionally biased region" description="Low complexity" evidence="3">
    <location>
        <begin position="369"/>
        <end position="381"/>
    </location>
</feature>
<feature type="compositionally biased region" description="Polar residues" evidence="3">
    <location>
        <begin position="399"/>
        <end position="408"/>
    </location>
</feature>
<feature type="compositionally biased region" description="Polar residues" evidence="3">
    <location>
        <begin position="415"/>
        <end position="435"/>
    </location>
</feature>
<feature type="compositionally biased region" description="Polar residues" evidence="3">
    <location>
        <begin position="1009"/>
        <end position="1024"/>
    </location>
</feature>
<feature type="compositionally biased region" description="Polar residues" evidence="3">
    <location>
        <begin position="1065"/>
        <end position="1082"/>
    </location>
</feature>
<feature type="active site" description="For protease activity; shared with dimeric partner" evidence="1">
    <location>
        <position position="457"/>
    </location>
</feature>
<feature type="binding site" evidence="2">
    <location>
        <position position="667"/>
    </location>
    <ligand>
        <name>Mg(2+)</name>
        <dbReference type="ChEBI" id="CHEBI:18420"/>
        <label>1</label>
        <note>catalytic; for integrase activity</note>
    </ligand>
</feature>
<feature type="binding site" evidence="2">
    <location>
        <position position="732"/>
    </location>
    <ligand>
        <name>Mg(2+)</name>
        <dbReference type="ChEBI" id="CHEBI:18420"/>
        <label>1</label>
        <note>catalytic; for integrase activity</note>
    </ligand>
</feature>
<feature type="binding site" evidence="2">
    <location>
        <position position="1361"/>
    </location>
    <ligand>
        <name>Mg(2+)</name>
        <dbReference type="ChEBI" id="CHEBI:18420"/>
        <label>2</label>
        <note>catalytic; for reverse transcriptase activity</note>
    </ligand>
</feature>
<feature type="binding site" evidence="2">
    <location>
        <position position="1442"/>
    </location>
    <ligand>
        <name>Mg(2+)</name>
        <dbReference type="ChEBI" id="CHEBI:18420"/>
        <label>2</label>
        <note>catalytic; for reverse transcriptase activity</note>
    </ligand>
</feature>
<feature type="binding site" evidence="2">
    <location>
        <position position="1443"/>
    </location>
    <ligand>
        <name>Mg(2+)</name>
        <dbReference type="ChEBI" id="CHEBI:18420"/>
        <label>2</label>
        <note>catalytic; for reverse transcriptase activity</note>
    </ligand>
</feature>
<feature type="binding site" evidence="2">
    <location>
        <position position="1625"/>
    </location>
    <ligand>
        <name>Mg(2+)</name>
        <dbReference type="ChEBI" id="CHEBI:18420"/>
        <label>3</label>
        <note>catalytic; for RNase H activity</note>
    </ligand>
</feature>
<feature type="binding site" evidence="2">
    <location>
        <position position="1667"/>
    </location>
    <ligand>
        <name>Mg(2+)</name>
        <dbReference type="ChEBI" id="CHEBI:18420"/>
        <label>3</label>
        <note>catalytic; for RNase H activity</note>
    </ligand>
</feature>
<feature type="binding site" evidence="2">
    <location>
        <position position="1700"/>
    </location>
    <ligand>
        <name>Mg(2+)</name>
        <dbReference type="ChEBI" id="CHEBI:18420"/>
        <label>3</label>
        <note>catalytic; for RNase H activity</note>
    </ligand>
</feature>
<feature type="site" description="Cleavage; by Ty2 protease" evidence="1">
    <location>
        <begin position="397"/>
        <end position="398"/>
    </location>
</feature>
<feature type="site" description="Cleavage; by Ty2 protease" evidence="1">
    <location>
        <begin position="578"/>
        <end position="579"/>
    </location>
</feature>
<feature type="site" description="Cleavage; by Ty2 protease" evidence="1">
    <location>
        <begin position="1232"/>
        <end position="1233"/>
    </location>
</feature>
<organism>
    <name type="scientific">Saccharomyces cerevisiae (strain ATCC 204508 / S288c)</name>
    <name type="common">Baker's yeast</name>
    <dbReference type="NCBI Taxonomy" id="559292"/>
    <lineage>
        <taxon>Eukaryota</taxon>
        <taxon>Fungi</taxon>
        <taxon>Dikarya</taxon>
        <taxon>Ascomycota</taxon>
        <taxon>Saccharomycotina</taxon>
        <taxon>Saccharomycetes</taxon>
        <taxon>Saccharomycetales</taxon>
        <taxon>Saccharomycetaceae</taxon>
        <taxon>Saccharomyces</taxon>
    </lineage>
</organism>
<accession>Q03494</accession>
<accession>D6VSJ1</accession>
<keyword id="KW-0064">Aspartyl protease</keyword>
<keyword id="KW-0067">ATP-binding</keyword>
<keyword id="KW-0963">Cytoplasm</keyword>
<keyword id="KW-0229">DNA integration</keyword>
<keyword id="KW-0233">DNA recombination</keyword>
<keyword id="KW-0238">DNA-binding</keyword>
<keyword id="KW-0239">DNA-directed DNA polymerase</keyword>
<keyword id="KW-0255">Endonuclease</keyword>
<keyword id="KW-0378">Hydrolase</keyword>
<keyword id="KW-0460">Magnesium</keyword>
<keyword id="KW-0479">Metal-binding</keyword>
<keyword id="KW-0511">Multifunctional enzyme</keyword>
<keyword id="KW-0540">Nuclease</keyword>
<keyword id="KW-0547">Nucleotide-binding</keyword>
<keyword id="KW-0548">Nucleotidyltransferase</keyword>
<keyword id="KW-0539">Nucleus</keyword>
<keyword id="KW-0645">Protease</keyword>
<keyword id="KW-1185">Reference proteome</keyword>
<keyword id="KW-0688">Ribosomal frameshifting</keyword>
<keyword id="KW-0694">RNA-binding</keyword>
<keyword id="KW-0695">RNA-directed DNA polymerase</keyword>
<keyword id="KW-0808">Transferase</keyword>
<keyword id="KW-0814">Transposable element</keyword>
<keyword id="KW-0815">Transposition</keyword>
<keyword id="KW-1188">Viral release from host cell</keyword>
<keyword id="KW-0917">Virion maturation</keyword>
<keyword id="KW-0862">Zinc</keyword>
<keyword id="KW-0863">Zinc-finger</keyword>
<proteinExistence type="inferred from homology"/>